<gene>
    <name evidence="1" type="primary">mdh</name>
    <name type="ordered locus">FTA_1040</name>
</gene>
<keyword id="KW-0520">NAD</keyword>
<keyword id="KW-0560">Oxidoreductase</keyword>
<keyword id="KW-0816">Tricarboxylic acid cycle</keyword>
<comment type="function">
    <text evidence="1">Catalyzes the reversible oxidation of malate to oxaloacetate.</text>
</comment>
<comment type="catalytic activity">
    <reaction evidence="1">
        <text>(S)-malate + NAD(+) = oxaloacetate + NADH + H(+)</text>
        <dbReference type="Rhea" id="RHEA:21432"/>
        <dbReference type="ChEBI" id="CHEBI:15378"/>
        <dbReference type="ChEBI" id="CHEBI:15589"/>
        <dbReference type="ChEBI" id="CHEBI:16452"/>
        <dbReference type="ChEBI" id="CHEBI:57540"/>
        <dbReference type="ChEBI" id="CHEBI:57945"/>
        <dbReference type="EC" id="1.1.1.37"/>
    </reaction>
</comment>
<comment type="similarity">
    <text evidence="1">Belongs to the LDH/MDH superfamily. MDH type 3 family.</text>
</comment>
<evidence type="ECO:0000255" key="1">
    <source>
        <dbReference type="HAMAP-Rule" id="MF_00487"/>
    </source>
</evidence>
<reference key="1">
    <citation type="journal article" date="2009" name="PLoS ONE">
        <title>Complete genome sequence of Francisella tularensis subspecies holarctica FTNF002-00.</title>
        <authorList>
            <person name="Barabote R.D."/>
            <person name="Xie G."/>
            <person name="Brettin T.S."/>
            <person name="Hinrichs S.H."/>
            <person name="Fey P.D."/>
            <person name="Jay J.J."/>
            <person name="Engle J.L."/>
            <person name="Godbole S.D."/>
            <person name="Noronha J.M."/>
            <person name="Scheuermann R.H."/>
            <person name="Zhou L.W."/>
            <person name="Lion C."/>
            <person name="Dempsey M.P."/>
        </authorList>
    </citation>
    <scope>NUCLEOTIDE SEQUENCE [LARGE SCALE GENOMIC DNA]</scope>
    <source>
        <strain>FTNF002-00 / FTA</strain>
    </source>
</reference>
<dbReference type="EC" id="1.1.1.37" evidence="1"/>
<dbReference type="EMBL" id="CP000803">
    <property type="protein sequence ID" value="ABU61516.2"/>
    <property type="molecule type" value="Genomic_DNA"/>
</dbReference>
<dbReference type="RefSeq" id="WP_010030432.1">
    <property type="nucleotide sequence ID" value="NC_009749.1"/>
</dbReference>
<dbReference type="SMR" id="A7NC13"/>
<dbReference type="KEGG" id="fta:FTA_1040"/>
<dbReference type="HOGENOM" id="CLU_045401_2_1_6"/>
<dbReference type="GO" id="GO:0004459">
    <property type="term" value="F:L-lactate dehydrogenase activity"/>
    <property type="evidence" value="ECO:0007669"/>
    <property type="project" value="TreeGrafter"/>
</dbReference>
<dbReference type="GO" id="GO:0030060">
    <property type="term" value="F:L-malate dehydrogenase (NAD+) activity"/>
    <property type="evidence" value="ECO:0007669"/>
    <property type="project" value="UniProtKB-UniRule"/>
</dbReference>
<dbReference type="GO" id="GO:0006089">
    <property type="term" value="P:lactate metabolic process"/>
    <property type="evidence" value="ECO:0007669"/>
    <property type="project" value="TreeGrafter"/>
</dbReference>
<dbReference type="GO" id="GO:0006099">
    <property type="term" value="P:tricarboxylic acid cycle"/>
    <property type="evidence" value="ECO:0007669"/>
    <property type="project" value="UniProtKB-UniRule"/>
</dbReference>
<dbReference type="CDD" id="cd01339">
    <property type="entry name" value="LDH-like_MDH"/>
    <property type="match status" value="1"/>
</dbReference>
<dbReference type="FunFam" id="3.40.50.720:FF:000018">
    <property type="entry name" value="Malate dehydrogenase"/>
    <property type="match status" value="1"/>
</dbReference>
<dbReference type="FunFam" id="3.90.110.10:FF:000004">
    <property type="entry name" value="Malate dehydrogenase"/>
    <property type="match status" value="1"/>
</dbReference>
<dbReference type="Gene3D" id="3.90.110.10">
    <property type="entry name" value="Lactate dehydrogenase/glycoside hydrolase, family 4, C-terminal"/>
    <property type="match status" value="1"/>
</dbReference>
<dbReference type="Gene3D" id="3.40.50.720">
    <property type="entry name" value="NAD(P)-binding Rossmann-like Domain"/>
    <property type="match status" value="1"/>
</dbReference>
<dbReference type="HAMAP" id="MF_00487">
    <property type="entry name" value="Malate_dehydrog_3"/>
    <property type="match status" value="1"/>
</dbReference>
<dbReference type="InterPro" id="IPR001557">
    <property type="entry name" value="L-lactate/malate_DH"/>
</dbReference>
<dbReference type="InterPro" id="IPR022383">
    <property type="entry name" value="Lactate/malate_DH_C"/>
</dbReference>
<dbReference type="InterPro" id="IPR001236">
    <property type="entry name" value="Lactate/malate_DH_N"/>
</dbReference>
<dbReference type="InterPro" id="IPR015955">
    <property type="entry name" value="Lactate_DH/Glyco_Ohase_4_C"/>
</dbReference>
<dbReference type="InterPro" id="IPR011275">
    <property type="entry name" value="Malate_DH_type3"/>
</dbReference>
<dbReference type="InterPro" id="IPR036291">
    <property type="entry name" value="NAD(P)-bd_dom_sf"/>
</dbReference>
<dbReference type="NCBIfam" id="TIGR01763">
    <property type="entry name" value="MalateDH_bact"/>
    <property type="match status" value="1"/>
</dbReference>
<dbReference type="NCBIfam" id="NF004863">
    <property type="entry name" value="PRK06223.1"/>
    <property type="match status" value="1"/>
</dbReference>
<dbReference type="PANTHER" id="PTHR43128">
    <property type="entry name" value="L-2-HYDROXYCARBOXYLATE DEHYDROGENASE (NAD(P)(+))"/>
    <property type="match status" value="1"/>
</dbReference>
<dbReference type="PANTHER" id="PTHR43128:SF16">
    <property type="entry name" value="L-LACTATE DEHYDROGENASE"/>
    <property type="match status" value="1"/>
</dbReference>
<dbReference type="Pfam" id="PF02866">
    <property type="entry name" value="Ldh_1_C"/>
    <property type="match status" value="1"/>
</dbReference>
<dbReference type="Pfam" id="PF00056">
    <property type="entry name" value="Ldh_1_N"/>
    <property type="match status" value="1"/>
</dbReference>
<dbReference type="PIRSF" id="PIRSF000102">
    <property type="entry name" value="Lac_mal_DH"/>
    <property type="match status" value="1"/>
</dbReference>
<dbReference type="PRINTS" id="PR00086">
    <property type="entry name" value="LLDHDRGNASE"/>
</dbReference>
<dbReference type="SUPFAM" id="SSF56327">
    <property type="entry name" value="LDH C-terminal domain-like"/>
    <property type="match status" value="1"/>
</dbReference>
<dbReference type="SUPFAM" id="SSF51735">
    <property type="entry name" value="NAD(P)-binding Rossmann-fold domains"/>
    <property type="match status" value="1"/>
</dbReference>
<name>MDH_FRATF</name>
<proteinExistence type="inferred from homology"/>
<organism>
    <name type="scientific">Francisella tularensis subsp. holarctica (strain FTNF002-00 / FTA)</name>
    <dbReference type="NCBI Taxonomy" id="458234"/>
    <lineage>
        <taxon>Bacteria</taxon>
        <taxon>Pseudomonadati</taxon>
        <taxon>Pseudomonadota</taxon>
        <taxon>Gammaproteobacteria</taxon>
        <taxon>Thiotrichales</taxon>
        <taxon>Francisellaceae</taxon>
        <taxon>Francisella</taxon>
    </lineage>
</organism>
<accession>A7NC13</accession>
<feature type="chain" id="PRO_1000081362" description="Malate dehydrogenase">
    <location>
        <begin position="1"/>
        <end position="319"/>
    </location>
</feature>
<feature type="active site" description="Proton acceptor" evidence="1">
    <location>
        <position position="176"/>
    </location>
</feature>
<feature type="binding site" evidence="1">
    <location>
        <begin position="10"/>
        <end position="15"/>
    </location>
    <ligand>
        <name>NAD(+)</name>
        <dbReference type="ChEBI" id="CHEBI:57540"/>
    </ligand>
</feature>
<feature type="binding site" evidence="1">
    <location>
        <position position="34"/>
    </location>
    <ligand>
        <name>NAD(+)</name>
        <dbReference type="ChEBI" id="CHEBI:57540"/>
    </ligand>
</feature>
<feature type="binding site" evidence="1">
    <location>
        <position position="83"/>
    </location>
    <ligand>
        <name>substrate</name>
    </ligand>
</feature>
<feature type="binding site" evidence="1">
    <location>
        <position position="89"/>
    </location>
    <ligand>
        <name>substrate</name>
    </ligand>
</feature>
<feature type="binding site" evidence="1">
    <location>
        <position position="96"/>
    </location>
    <ligand>
        <name>NAD(+)</name>
        <dbReference type="ChEBI" id="CHEBI:57540"/>
    </ligand>
</feature>
<feature type="binding site" evidence="1">
    <location>
        <begin position="119"/>
        <end position="121"/>
    </location>
    <ligand>
        <name>NAD(+)</name>
        <dbReference type="ChEBI" id="CHEBI:57540"/>
    </ligand>
</feature>
<feature type="binding site" evidence="1">
    <location>
        <position position="121"/>
    </location>
    <ligand>
        <name>substrate</name>
    </ligand>
</feature>
<feature type="binding site" evidence="1">
    <location>
        <position position="152"/>
    </location>
    <ligand>
        <name>substrate</name>
    </ligand>
</feature>
<sequence length="319" mass="34077">MARKKITLVGAGNIGGTLAHLALIKQLGDVVLFDIAQGMPNGKALDLLQTCPIEGVDFKVRGTNDYKDLENSDVVIVTAGVPRKPGMSRDDLLGINIKVMQTVGEGIKHNCPNAFVICITNPLDIMVNMLQKFSGVPDNKIVGMAGVLDSARFRTFLADELNVSVQQVQAYVMGGHGDTMVPLTKMSNVAGVSLEQLVKEGKLKQERLDAIVSRTRSGGGEIVALLKTGSAYYAPAAAGIQMAESFLKDKKMILPCAAKVKAGMYGLDEDLFVGVPTEISANGVRPIEVEISDKEREQLQVSINAVKDLNKAAAEILAK</sequence>
<protein>
    <recommendedName>
        <fullName evidence="1">Malate dehydrogenase</fullName>
        <ecNumber evidence="1">1.1.1.37</ecNumber>
    </recommendedName>
</protein>